<keyword id="KW-0687">Ribonucleoprotein</keyword>
<keyword id="KW-0689">Ribosomal protein</keyword>
<keyword id="KW-0694">RNA-binding</keyword>
<keyword id="KW-0699">rRNA-binding</keyword>
<comment type="function">
    <text evidence="1">With S4 and S12 plays an important role in translational accuracy.</text>
</comment>
<comment type="function">
    <text evidence="1">Located at the back of the 30S subunit body where it stabilizes the conformation of the head with respect to the body.</text>
</comment>
<comment type="subunit">
    <text evidence="1">Part of the 30S ribosomal subunit. Contacts proteins S4 and S8.</text>
</comment>
<comment type="domain">
    <text>The N-terminal domain interacts with the head of the 30S subunit; the C-terminal domain interacts with the body and contacts protein S4. The interaction surface between S4 and S5 is involved in control of translational fidelity.</text>
</comment>
<comment type="similarity">
    <text evidence="1">Belongs to the universal ribosomal protein uS5 family.</text>
</comment>
<feature type="chain" id="PRO_0000230365" description="Small ribosomal subunit protein uS5">
    <location>
        <begin position="1"/>
        <end position="172"/>
    </location>
</feature>
<feature type="domain" description="S5 DRBM" evidence="1">
    <location>
        <begin position="17"/>
        <end position="80"/>
    </location>
</feature>
<organism>
    <name type="scientific">Cupriavidus pinatubonensis (strain JMP 134 / LMG 1197)</name>
    <name type="common">Cupriavidus necator (strain JMP 134)</name>
    <dbReference type="NCBI Taxonomy" id="264198"/>
    <lineage>
        <taxon>Bacteria</taxon>
        <taxon>Pseudomonadati</taxon>
        <taxon>Pseudomonadota</taxon>
        <taxon>Betaproteobacteria</taxon>
        <taxon>Burkholderiales</taxon>
        <taxon>Burkholderiaceae</taxon>
        <taxon>Cupriavidus</taxon>
    </lineage>
</organism>
<accession>Q46WG1</accession>
<protein>
    <recommendedName>
        <fullName evidence="1">Small ribosomal subunit protein uS5</fullName>
    </recommendedName>
    <alternativeName>
        <fullName evidence="2">30S ribosomal protein S5</fullName>
    </alternativeName>
</protein>
<evidence type="ECO:0000255" key="1">
    <source>
        <dbReference type="HAMAP-Rule" id="MF_01307"/>
    </source>
</evidence>
<evidence type="ECO:0000305" key="2"/>
<gene>
    <name evidence="1" type="primary">rpsE</name>
    <name type="ordered locus">Reut_A3162</name>
</gene>
<reference key="1">
    <citation type="journal article" date="2010" name="PLoS ONE">
        <title>The complete multipartite genome sequence of Cupriavidus necator JMP134, a versatile pollutant degrader.</title>
        <authorList>
            <person name="Lykidis A."/>
            <person name="Perez-Pantoja D."/>
            <person name="Ledger T."/>
            <person name="Mavromatis K."/>
            <person name="Anderson I.J."/>
            <person name="Ivanova N.N."/>
            <person name="Hooper S.D."/>
            <person name="Lapidus A."/>
            <person name="Lucas S."/>
            <person name="Gonzalez B."/>
            <person name="Kyrpides N.C."/>
        </authorList>
    </citation>
    <scope>NUCLEOTIDE SEQUENCE [LARGE SCALE GENOMIC DNA]</scope>
    <source>
        <strain>JMP134 / LMG 1197</strain>
    </source>
</reference>
<dbReference type="EMBL" id="CP000090">
    <property type="protein sequence ID" value="AAZ62522.1"/>
    <property type="molecule type" value="Genomic_DNA"/>
</dbReference>
<dbReference type="SMR" id="Q46WG1"/>
<dbReference type="STRING" id="264198.Reut_A3162"/>
<dbReference type="KEGG" id="reu:Reut_A3162"/>
<dbReference type="eggNOG" id="COG0098">
    <property type="taxonomic scope" value="Bacteria"/>
</dbReference>
<dbReference type="HOGENOM" id="CLU_065898_2_2_4"/>
<dbReference type="OrthoDB" id="9809045at2"/>
<dbReference type="GO" id="GO:0015935">
    <property type="term" value="C:small ribosomal subunit"/>
    <property type="evidence" value="ECO:0007669"/>
    <property type="project" value="InterPro"/>
</dbReference>
<dbReference type="GO" id="GO:0019843">
    <property type="term" value="F:rRNA binding"/>
    <property type="evidence" value="ECO:0007669"/>
    <property type="project" value="UniProtKB-UniRule"/>
</dbReference>
<dbReference type="GO" id="GO:0003735">
    <property type="term" value="F:structural constituent of ribosome"/>
    <property type="evidence" value="ECO:0007669"/>
    <property type="project" value="InterPro"/>
</dbReference>
<dbReference type="GO" id="GO:0006412">
    <property type="term" value="P:translation"/>
    <property type="evidence" value="ECO:0007669"/>
    <property type="project" value="UniProtKB-UniRule"/>
</dbReference>
<dbReference type="FunFam" id="3.30.160.20:FF:000001">
    <property type="entry name" value="30S ribosomal protein S5"/>
    <property type="match status" value="1"/>
</dbReference>
<dbReference type="FunFam" id="3.30.230.10:FF:000002">
    <property type="entry name" value="30S ribosomal protein S5"/>
    <property type="match status" value="1"/>
</dbReference>
<dbReference type="Gene3D" id="3.30.160.20">
    <property type="match status" value="1"/>
</dbReference>
<dbReference type="Gene3D" id="3.30.230.10">
    <property type="match status" value="1"/>
</dbReference>
<dbReference type="HAMAP" id="MF_01307_B">
    <property type="entry name" value="Ribosomal_uS5_B"/>
    <property type="match status" value="1"/>
</dbReference>
<dbReference type="InterPro" id="IPR020568">
    <property type="entry name" value="Ribosomal_Su5_D2-typ_SF"/>
</dbReference>
<dbReference type="InterPro" id="IPR000851">
    <property type="entry name" value="Ribosomal_uS5"/>
</dbReference>
<dbReference type="InterPro" id="IPR005712">
    <property type="entry name" value="Ribosomal_uS5_bac-type"/>
</dbReference>
<dbReference type="InterPro" id="IPR005324">
    <property type="entry name" value="Ribosomal_uS5_C"/>
</dbReference>
<dbReference type="InterPro" id="IPR013810">
    <property type="entry name" value="Ribosomal_uS5_N"/>
</dbReference>
<dbReference type="InterPro" id="IPR018192">
    <property type="entry name" value="Ribosomal_uS5_N_CS"/>
</dbReference>
<dbReference type="InterPro" id="IPR014721">
    <property type="entry name" value="Ribsml_uS5_D2-typ_fold_subgr"/>
</dbReference>
<dbReference type="NCBIfam" id="TIGR01021">
    <property type="entry name" value="rpsE_bact"/>
    <property type="match status" value="1"/>
</dbReference>
<dbReference type="PANTHER" id="PTHR48277">
    <property type="entry name" value="MITOCHONDRIAL RIBOSOMAL PROTEIN S5"/>
    <property type="match status" value="1"/>
</dbReference>
<dbReference type="PANTHER" id="PTHR48277:SF1">
    <property type="entry name" value="MITOCHONDRIAL RIBOSOMAL PROTEIN S5"/>
    <property type="match status" value="1"/>
</dbReference>
<dbReference type="Pfam" id="PF00333">
    <property type="entry name" value="Ribosomal_S5"/>
    <property type="match status" value="1"/>
</dbReference>
<dbReference type="Pfam" id="PF03719">
    <property type="entry name" value="Ribosomal_S5_C"/>
    <property type="match status" value="1"/>
</dbReference>
<dbReference type="SUPFAM" id="SSF54768">
    <property type="entry name" value="dsRNA-binding domain-like"/>
    <property type="match status" value="1"/>
</dbReference>
<dbReference type="SUPFAM" id="SSF54211">
    <property type="entry name" value="Ribosomal protein S5 domain 2-like"/>
    <property type="match status" value="1"/>
</dbReference>
<dbReference type="PROSITE" id="PS00585">
    <property type="entry name" value="RIBOSOMAL_S5"/>
    <property type="match status" value="1"/>
</dbReference>
<dbReference type="PROSITE" id="PS50881">
    <property type="entry name" value="S5_DSRBD"/>
    <property type="match status" value="1"/>
</dbReference>
<name>RS5_CUPPJ</name>
<proteinExistence type="inferred from homology"/>
<sequence>MAKMQAKVQQDERDDGLREKMISVNRVTKVVKGGRILGFAALTVVGDGDGRIGMGKGKAKEVPVAVQKAMDEARRKMVKVSLKNGTLQHEVVGKHGAAKVLMMPAKEGTGVIAGGPMRAIFEVMGVTNVVTKSHGSTNPYNMVRATLDGLQKMSTPSEIAAKRGKSVEDILG</sequence>